<sequence>MSEVPRFELRNKRKVGKKQKVDIFGDKDDESMLQIDCETDSLISESVSSTHSYEDYSKAYKELTLETPADTNDSTSTIIDSAYEESWYDKTIKDEQTKENKKTDKKLKRIENIKENNQNDSTSMQIAQLSLRIQRIESETKLKTLDSAYNTIITQADNLTTPQKKSLISAILATMR</sequence>
<reference key="1">
    <citation type="journal article" date="2008" name="J. Med. Virol.">
        <title>Whole genomic characterization of a human rotavirus strain B219 belonging to a novel group of the genus Rotavirus.</title>
        <authorList>
            <person name="Nagashima S."/>
            <person name="Kobayashi N."/>
            <person name="Ishino M."/>
            <person name="Alam M.M."/>
            <person name="Ahmed M.U."/>
            <person name="Paul S.K."/>
            <person name="Ganesh B."/>
            <person name="Chawla-Sarkar M."/>
            <person name="Krishnan T."/>
            <person name="Naik T.N."/>
            <person name="Wang Y.-H."/>
        </authorList>
    </citation>
    <scope>NUCLEOTIDE SEQUENCE [MRNA]</scope>
</reference>
<dbReference type="EMBL" id="EF453360">
    <property type="protein sequence ID" value="ABR32127.1"/>
    <property type="molecule type" value="mRNA"/>
</dbReference>
<dbReference type="Proteomes" id="UP000174021">
    <property type="component" value="Genome"/>
</dbReference>
<dbReference type="GO" id="GO:0030430">
    <property type="term" value="C:host cell cytoplasm"/>
    <property type="evidence" value="ECO:0007669"/>
    <property type="project" value="UniProtKB-SubCell"/>
</dbReference>
<dbReference type="GO" id="GO:0016887">
    <property type="term" value="F:ATP hydrolysis activity"/>
    <property type="evidence" value="ECO:0007669"/>
    <property type="project" value="UniProtKB-UniRule"/>
</dbReference>
<dbReference type="GO" id="GO:0000287">
    <property type="term" value="F:magnesium ion binding"/>
    <property type="evidence" value="ECO:0007669"/>
    <property type="project" value="UniProtKB-UniRule"/>
</dbReference>
<dbReference type="GO" id="GO:0000166">
    <property type="term" value="F:nucleotide binding"/>
    <property type="evidence" value="ECO:0007669"/>
    <property type="project" value="UniProtKB-UniRule"/>
</dbReference>
<dbReference type="GO" id="GO:0003723">
    <property type="term" value="F:RNA binding"/>
    <property type="evidence" value="ECO:0007669"/>
    <property type="project" value="UniProtKB-UniRule"/>
</dbReference>
<dbReference type="GO" id="GO:0019079">
    <property type="term" value="P:viral genome replication"/>
    <property type="evidence" value="ECO:0007669"/>
    <property type="project" value="UniProtKB-UniRule"/>
</dbReference>
<dbReference type="HAMAP" id="MF_04092">
    <property type="entry name" value="ROTA_NSP5"/>
    <property type="match status" value="1"/>
</dbReference>
<dbReference type="InterPro" id="IPR002512">
    <property type="entry name" value="Rotavirus_A/C_NSP5"/>
</dbReference>
<dbReference type="InterPro" id="IPR020244">
    <property type="entry name" value="Rotavirus_B_NSP5"/>
</dbReference>
<dbReference type="Pfam" id="PF17580">
    <property type="entry name" value="GBR_NSP5"/>
    <property type="match status" value="1"/>
</dbReference>
<accession>A9Q1L2</accession>
<comment type="function">
    <text evidence="1">Plays an essential role in the viral genome replication. Participates, together with NSP2, in the formation of viral factories (viroplasms) which are large inclusions in the host cytoplasm where replication intermediates are assembled and viral RNA replication takes place. Orchestrates the recruitment of viroplasmic proteins such as capsid proteins to these factories.</text>
</comment>
<comment type="subunit">
    <text evidence="1">Homodimer. Interacts with VP1. Interacts with VP2. Interacts with NSP2 and NSP6.</text>
</comment>
<comment type="subcellular location">
    <subcellularLocation>
        <location evidence="1">Host cytoplasm</location>
    </subcellularLocation>
    <text evidence="1">Found in spherical cytoplasmic structures, called virus factories, that appear early after infection and are the site of viral replication and packaging.</text>
</comment>
<comment type="PTM">
    <text evidence="1">O-glycosylated.</text>
</comment>
<comment type="similarity">
    <text evidence="1">Belongs to the rotavirus NSP5 family.</text>
</comment>
<organismHost>
    <name type="scientific">Homo sapiens</name>
    <name type="common">Human</name>
    <dbReference type="NCBI Taxonomy" id="9606"/>
</organismHost>
<protein>
    <recommendedName>
        <fullName evidence="1">Non-structural protein 5</fullName>
        <shortName evidence="1">NSP5</shortName>
    </recommendedName>
    <alternativeName>
        <fullName evidence="1">NS26</fullName>
    </alternativeName>
</protein>
<feature type="chain" id="PRO_0000369867" description="Non-structural protein 5">
    <location>
        <begin position="1"/>
        <end position="176"/>
    </location>
</feature>
<keyword id="KW-0325">Glycoprotein</keyword>
<keyword id="KW-1035">Host cytoplasm</keyword>
<keyword id="KW-0547">Nucleotide-binding</keyword>
<keyword id="KW-0694">RNA-binding</keyword>
<evidence type="ECO:0000255" key="1">
    <source>
        <dbReference type="HAMAP-Rule" id="MF_04092"/>
    </source>
</evidence>
<organism>
    <name type="scientific">Rotavirus X (isolate RVX/Human/Bangladesh/NADRV-B219/2002/GXP[X])</name>
    <name type="common">RV ADRV-N</name>
    <name type="synonym">Rotavirus (isolate novel adult diarrhea rotavirus-B219)</name>
    <dbReference type="NCBI Taxonomy" id="348136"/>
    <lineage>
        <taxon>Viruses</taxon>
        <taxon>Riboviria</taxon>
        <taxon>Orthornavirae</taxon>
        <taxon>Duplornaviricota</taxon>
        <taxon>Resentoviricetes</taxon>
        <taxon>Reovirales</taxon>
        <taxon>Sedoreoviridae</taxon>
        <taxon>Rotavirus</taxon>
    </lineage>
</organism>
<name>NSP5_ROTB2</name>
<proteinExistence type="evidence at transcript level"/>